<gene>
    <name evidence="1" type="primary">pheS</name>
    <name type="ordered locus">SERP0721</name>
</gene>
<sequence>MTQNDLMSELKQQALVDINEANDAQALQEVKVKYLGKKGSVSALMKNMKDLPNEEKPAYGQKVNELRQTIQSELDERQKLIKEEKLNQQLSEETIDVTLPSRHIEIGSKHPLTRTVEEIEDLFLGLGYEIVDGYEVEQDYYNFEALNLPKSHPARDMQDSFYITEEILMRTHTSPVQARTMEKRKGQGPVKIICPGKVYRRDSDDATHSHQFTQIEGLVVDKNIKMSDLKGTLELVAKKLFGADREIRLRPSYFPFTEPSVEVDVSCFKCKGQGCNVCKHTGWIEILGAGMVHPNVLEMAGFDSKEYSGFAFGMGPDRIAMLKYGIEDIRHFYTNDVRFLDQFKAVEDRGEQ</sequence>
<organism>
    <name type="scientific">Staphylococcus epidermidis (strain ATCC 35984 / DSM 28319 / BCRC 17069 / CCUG 31568 / BM 3577 / RP62A)</name>
    <dbReference type="NCBI Taxonomy" id="176279"/>
    <lineage>
        <taxon>Bacteria</taxon>
        <taxon>Bacillati</taxon>
        <taxon>Bacillota</taxon>
        <taxon>Bacilli</taxon>
        <taxon>Bacillales</taxon>
        <taxon>Staphylococcaceae</taxon>
        <taxon>Staphylococcus</taxon>
    </lineage>
</organism>
<comment type="catalytic activity">
    <reaction evidence="1">
        <text>tRNA(Phe) + L-phenylalanine + ATP = L-phenylalanyl-tRNA(Phe) + AMP + diphosphate + H(+)</text>
        <dbReference type="Rhea" id="RHEA:19413"/>
        <dbReference type="Rhea" id="RHEA-COMP:9668"/>
        <dbReference type="Rhea" id="RHEA-COMP:9699"/>
        <dbReference type="ChEBI" id="CHEBI:15378"/>
        <dbReference type="ChEBI" id="CHEBI:30616"/>
        <dbReference type="ChEBI" id="CHEBI:33019"/>
        <dbReference type="ChEBI" id="CHEBI:58095"/>
        <dbReference type="ChEBI" id="CHEBI:78442"/>
        <dbReference type="ChEBI" id="CHEBI:78531"/>
        <dbReference type="ChEBI" id="CHEBI:456215"/>
        <dbReference type="EC" id="6.1.1.20"/>
    </reaction>
</comment>
<comment type="cofactor">
    <cofactor evidence="1">
        <name>Mg(2+)</name>
        <dbReference type="ChEBI" id="CHEBI:18420"/>
    </cofactor>
    <text evidence="1">Binds 2 magnesium ions per tetramer.</text>
</comment>
<comment type="subunit">
    <text evidence="1">Tetramer of two alpha and two beta subunits.</text>
</comment>
<comment type="subcellular location">
    <subcellularLocation>
        <location evidence="1">Cytoplasm</location>
    </subcellularLocation>
</comment>
<comment type="similarity">
    <text evidence="1">Belongs to the class-II aminoacyl-tRNA synthetase family. Phe-tRNA synthetase alpha subunit type 1 subfamily.</text>
</comment>
<name>SYFA_STAEQ</name>
<proteinExistence type="inferred from homology"/>
<keyword id="KW-0030">Aminoacyl-tRNA synthetase</keyword>
<keyword id="KW-0067">ATP-binding</keyword>
<keyword id="KW-0963">Cytoplasm</keyword>
<keyword id="KW-0436">Ligase</keyword>
<keyword id="KW-0460">Magnesium</keyword>
<keyword id="KW-0479">Metal-binding</keyword>
<keyword id="KW-0547">Nucleotide-binding</keyword>
<keyword id="KW-0648">Protein biosynthesis</keyword>
<keyword id="KW-1185">Reference proteome</keyword>
<accession>Q5HQ36</accession>
<evidence type="ECO:0000255" key="1">
    <source>
        <dbReference type="HAMAP-Rule" id="MF_00281"/>
    </source>
</evidence>
<reference key="1">
    <citation type="journal article" date="2005" name="J. Bacteriol.">
        <title>Insights on evolution of virulence and resistance from the complete genome analysis of an early methicillin-resistant Staphylococcus aureus strain and a biofilm-producing methicillin-resistant Staphylococcus epidermidis strain.</title>
        <authorList>
            <person name="Gill S.R."/>
            <person name="Fouts D.E."/>
            <person name="Archer G.L."/>
            <person name="Mongodin E.F."/>
            <person name="DeBoy R.T."/>
            <person name="Ravel J."/>
            <person name="Paulsen I.T."/>
            <person name="Kolonay J.F."/>
            <person name="Brinkac L.M."/>
            <person name="Beanan M.J."/>
            <person name="Dodson R.J."/>
            <person name="Daugherty S.C."/>
            <person name="Madupu R."/>
            <person name="Angiuoli S.V."/>
            <person name="Durkin A.S."/>
            <person name="Haft D.H."/>
            <person name="Vamathevan J.J."/>
            <person name="Khouri H."/>
            <person name="Utterback T.R."/>
            <person name="Lee C."/>
            <person name="Dimitrov G."/>
            <person name="Jiang L."/>
            <person name="Qin H."/>
            <person name="Weidman J."/>
            <person name="Tran K."/>
            <person name="Kang K.H."/>
            <person name="Hance I.R."/>
            <person name="Nelson K.E."/>
            <person name="Fraser C.M."/>
        </authorList>
    </citation>
    <scope>NUCLEOTIDE SEQUENCE [LARGE SCALE GENOMIC DNA]</scope>
    <source>
        <strain>ATCC 35984 / DSM 28319 / BCRC 17069 / CCUG 31568 / BM 3577 / RP62A</strain>
    </source>
</reference>
<dbReference type="EC" id="6.1.1.20" evidence="1"/>
<dbReference type="EMBL" id="CP000029">
    <property type="protein sequence ID" value="AAW54087.1"/>
    <property type="molecule type" value="Genomic_DNA"/>
</dbReference>
<dbReference type="RefSeq" id="WP_002446204.1">
    <property type="nucleotide sequence ID" value="NC_002976.3"/>
</dbReference>
<dbReference type="SMR" id="Q5HQ36"/>
<dbReference type="STRING" id="176279.SERP0721"/>
<dbReference type="KEGG" id="ser:SERP0721"/>
<dbReference type="eggNOG" id="COG0016">
    <property type="taxonomic scope" value="Bacteria"/>
</dbReference>
<dbReference type="HOGENOM" id="CLU_025086_0_1_9"/>
<dbReference type="Proteomes" id="UP000000531">
    <property type="component" value="Chromosome"/>
</dbReference>
<dbReference type="GO" id="GO:0005737">
    <property type="term" value="C:cytoplasm"/>
    <property type="evidence" value="ECO:0007669"/>
    <property type="project" value="UniProtKB-SubCell"/>
</dbReference>
<dbReference type="GO" id="GO:0005524">
    <property type="term" value="F:ATP binding"/>
    <property type="evidence" value="ECO:0007669"/>
    <property type="project" value="UniProtKB-UniRule"/>
</dbReference>
<dbReference type="GO" id="GO:0140096">
    <property type="term" value="F:catalytic activity, acting on a protein"/>
    <property type="evidence" value="ECO:0007669"/>
    <property type="project" value="UniProtKB-ARBA"/>
</dbReference>
<dbReference type="GO" id="GO:0000287">
    <property type="term" value="F:magnesium ion binding"/>
    <property type="evidence" value="ECO:0007669"/>
    <property type="project" value="UniProtKB-UniRule"/>
</dbReference>
<dbReference type="GO" id="GO:0004826">
    <property type="term" value="F:phenylalanine-tRNA ligase activity"/>
    <property type="evidence" value="ECO:0007669"/>
    <property type="project" value="UniProtKB-UniRule"/>
</dbReference>
<dbReference type="GO" id="GO:0016740">
    <property type="term" value="F:transferase activity"/>
    <property type="evidence" value="ECO:0007669"/>
    <property type="project" value="UniProtKB-ARBA"/>
</dbReference>
<dbReference type="GO" id="GO:0000049">
    <property type="term" value="F:tRNA binding"/>
    <property type="evidence" value="ECO:0007669"/>
    <property type="project" value="InterPro"/>
</dbReference>
<dbReference type="GO" id="GO:0006432">
    <property type="term" value="P:phenylalanyl-tRNA aminoacylation"/>
    <property type="evidence" value="ECO:0007669"/>
    <property type="project" value="UniProtKB-UniRule"/>
</dbReference>
<dbReference type="CDD" id="cd00496">
    <property type="entry name" value="PheRS_alpha_core"/>
    <property type="match status" value="1"/>
</dbReference>
<dbReference type="FunFam" id="3.30.930.10:FF:000003">
    <property type="entry name" value="Phenylalanine--tRNA ligase alpha subunit"/>
    <property type="match status" value="1"/>
</dbReference>
<dbReference type="Gene3D" id="3.30.930.10">
    <property type="entry name" value="Bira Bifunctional Protein, Domain 2"/>
    <property type="match status" value="1"/>
</dbReference>
<dbReference type="HAMAP" id="MF_00281">
    <property type="entry name" value="Phe_tRNA_synth_alpha1"/>
    <property type="match status" value="1"/>
</dbReference>
<dbReference type="InterPro" id="IPR006195">
    <property type="entry name" value="aa-tRNA-synth_II"/>
</dbReference>
<dbReference type="InterPro" id="IPR045864">
    <property type="entry name" value="aa-tRNA-synth_II/BPL/LPL"/>
</dbReference>
<dbReference type="InterPro" id="IPR004529">
    <property type="entry name" value="Phe-tRNA-synth_IIc_asu"/>
</dbReference>
<dbReference type="InterPro" id="IPR004188">
    <property type="entry name" value="Phe-tRNA_ligase_II_N"/>
</dbReference>
<dbReference type="InterPro" id="IPR022911">
    <property type="entry name" value="Phe_tRNA_ligase_alpha1_bac"/>
</dbReference>
<dbReference type="InterPro" id="IPR002319">
    <property type="entry name" value="Phenylalanyl-tRNA_Synthase"/>
</dbReference>
<dbReference type="InterPro" id="IPR010978">
    <property type="entry name" value="tRNA-bd_arm"/>
</dbReference>
<dbReference type="NCBIfam" id="TIGR00468">
    <property type="entry name" value="pheS"/>
    <property type="match status" value="1"/>
</dbReference>
<dbReference type="PANTHER" id="PTHR11538:SF41">
    <property type="entry name" value="PHENYLALANINE--TRNA LIGASE, MITOCHONDRIAL"/>
    <property type="match status" value="1"/>
</dbReference>
<dbReference type="PANTHER" id="PTHR11538">
    <property type="entry name" value="PHENYLALANYL-TRNA SYNTHETASE"/>
    <property type="match status" value="1"/>
</dbReference>
<dbReference type="Pfam" id="PF02912">
    <property type="entry name" value="Phe_tRNA-synt_N"/>
    <property type="match status" value="1"/>
</dbReference>
<dbReference type="Pfam" id="PF01409">
    <property type="entry name" value="tRNA-synt_2d"/>
    <property type="match status" value="1"/>
</dbReference>
<dbReference type="SUPFAM" id="SSF55681">
    <property type="entry name" value="Class II aaRS and biotin synthetases"/>
    <property type="match status" value="1"/>
</dbReference>
<dbReference type="SUPFAM" id="SSF46589">
    <property type="entry name" value="tRNA-binding arm"/>
    <property type="match status" value="1"/>
</dbReference>
<dbReference type="PROSITE" id="PS50862">
    <property type="entry name" value="AA_TRNA_LIGASE_II"/>
    <property type="match status" value="1"/>
</dbReference>
<feature type="chain" id="PRO_0000126767" description="Phenylalanine--tRNA ligase alpha subunit">
    <location>
        <begin position="1"/>
        <end position="352"/>
    </location>
</feature>
<feature type="binding site" evidence="1">
    <location>
        <position position="258"/>
    </location>
    <ligand>
        <name>Mg(2+)</name>
        <dbReference type="ChEBI" id="CHEBI:18420"/>
        <note>shared with beta subunit</note>
    </ligand>
</feature>
<protein>
    <recommendedName>
        <fullName evidence="1">Phenylalanine--tRNA ligase alpha subunit</fullName>
        <ecNumber evidence="1">6.1.1.20</ecNumber>
    </recommendedName>
    <alternativeName>
        <fullName evidence="1">Phenylalanyl-tRNA synthetase alpha subunit</fullName>
        <shortName evidence="1">PheRS</shortName>
    </alternativeName>
</protein>